<organism>
    <name type="scientific">Escherichia coli O139:H28 (strain E24377A / ETEC)</name>
    <dbReference type="NCBI Taxonomy" id="331111"/>
    <lineage>
        <taxon>Bacteria</taxon>
        <taxon>Pseudomonadati</taxon>
        <taxon>Pseudomonadota</taxon>
        <taxon>Gammaproteobacteria</taxon>
        <taxon>Enterobacterales</taxon>
        <taxon>Enterobacteriaceae</taxon>
        <taxon>Escherichia</taxon>
    </lineage>
</organism>
<sequence>MSQLTHINAAGEAHMVDVSAKAETVREARAEAFVTMRSETLAMIIDGRHHKGDVFATARIAGIQAAKRTWDLIPLCHPLMLSKVEVNLQAEPEHNRVRIETLCRLTGKTGVEMEALTAASVAALTIYDMCKAVQKDMVIGPVRLLAKSGGKSGDFKVEADD</sequence>
<feature type="chain" id="PRO_1000066798" description="Cyclic pyranopterin monophosphate synthase">
    <location>
        <begin position="1"/>
        <end position="161"/>
    </location>
</feature>
<feature type="active site" evidence="1">
    <location>
        <position position="128"/>
    </location>
</feature>
<feature type="binding site" evidence="1">
    <location>
        <begin position="75"/>
        <end position="77"/>
    </location>
    <ligand>
        <name>substrate</name>
    </ligand>
</feature>
<feature type="binding site" evidence="1">
    <location>
        <begin position="113"/>
        <end position="114"/>
    </location>
    <ligand>
        <name>substrate</name>
    </ligand>
</feature>
<proteinExistence type="inferred from homology"/>
<gene>
    <name evidence="1" type="primary">moaC</name>
    <name type="ordered locus">EcE24377A_0846</name>
</gene>
<reference key="1">
    <citation type="journal article" date="2008" name="J. Bacteriol.">
        <title>The pangenome structure of Escherichia coli: comparative genomic analysis of E. coli commensal and pathogenic isolates.</title>
        <authorList>
            <person name="Rasko D.A."/>
            <person name="Rosovitz M.J."/>
            <person name="Myers G.S.A."/>
            <person name="Mongodin E.F."/>
            <person name="Fricke W.F."/>
            <person name="Gajer P."/>
            <person name="Crabtree J."/>
            <person name="Sebaihia M."/>
            <person name="Thomson N.R."/>
            <person name="Chaudhuri R."/>
            <person name="Henderson I.R."/>
            <person name="Sperandio V."/>
            <person name="Ravel J."/>
        </authorList>
    </citation>
    <scope>NUCLEOTIDE SEQUENCE [LARGE SCALE GENOMIC DNA]</scope>
    <source>
        <strain>E24377A / ETEC</strain>
    </source>
</reference>
<protein>
    <recommendedName>
        <fullName evidence="1">Cyclic pyranopterin monophosphate synthase</fullName>
        <ecNumber evidence="1">4.6.1.17</ecNumber>
    </recommendedName>
    <alternativeName>
        <fullName evidence="1">Molybdenum cofactor biosynthesis protein C</fullName>
    </alternativeName>
</protein>
<accession>A7ZJJ2</accession>
<keyword id="KW-0456">Lyase</keyword>
<keyword id="KW-0501">Molybdenum cofactor biosynthesis</keyword>
<keyword id="KW-1185">Reference proteome</keyword>
<comment type="function">
    <text evidence="1">Catalyzes the conversion of (8S)-3',8-cyclo-7,8-dihydroguanosine 5'-triphosphate to cyclic pyranopterin monophosphate (cPMP).</text>
</comment>
<comment type="catalytic activity">
    <reaction evidence="1">
        <text>(8S)-3',8-cyclo-7,8-dihydroguanosine 5'-triphosphate = cyclic pyranopterin phosphate + diphosphate</text>
        <dbReference type="Rhea" id="RHEA:49580"/>
        <dbReference type="ChEBI" id="CHEBI:33019"/>
        <dbReference type="ChEBI" id="CHEBI:59648"/>
        <dbReference type="ChEBI" id="CHEBI:131766"/>
        <dbReference type="EC" id="4.6.1.17"/>
    </reaction>
</comment>
<comment type="pathway">
    <text evidence="1">Cofactor biosynthesis; molybdopterin biosynthesis.</text>
</comment>
<comment type="subunit">
    <text evidence="1">Homohexamer; trimer of dimers.</text>
</comment>
<comment type="similarity">
    <text evidence="1">Belongs to the MoaC family.</text>
</comment>
<name>MOAC_ECO24</name>
<evidence type="ECO:0000255" key="1">
    <source>
        <dbReference type="HAMAP-Rule" id="MF_01224"/>
    </source>
</evidence>
<dbReference type="EC" id="4.6.1.17" evidence="1"/>
<dbReference type="EMBL" id="CP000800">
    <property type="protein sequence ID" value="ABV20648.1"/>
    <property type="molecule type" value="Genomic_DNA"/>
</dbReference>
<dbReference type="RefSeq" id="WP_000080885.1">
    <property type="nucleotide sequence ID" value="NC_009801.1"/>
</dbReference>
<dbReference type="SMR" id="A7ZJJ2"/>
<dbReference type="GeneID" id="86945666"/>
<dbReference type="KEGG" id="ecw:EcE24377A_0846"/>
<dbReference type="HOGENOM" id="CLU_074693_1_1_6"/>
<dbReference type="UniPathway" id="UPA00344"/>
<dbReference type="Proteomes" id="UP000001122">
    <property type="component" value="Chromosome"/>
</dbReference>
<dbReference type="GO" id="GO:0061799">
    <property type="term" value="F:cyclic pyranopterin monophosphate synthase activity"/>
    <property type="evidence" value="ECO:0007669"/>
    <property type="project" value="UniProtKB-UniRule"/>
</dbReference>
<dbReference type="GO" id="GO:0006777">
    <property type="term" value="P:Mo-molybdopterin cofactor biosynthetic process"/>
    <property type="evidence" value="ECO:0007669"/>
    <property type="project" value="UniProtKB-UniRule"/>
</dbReference>
<dbReference type="CDD" id="cd01420">
    <property type="entry name" value="MoaC_PE"/>
    <property type="match status" value="1"/>
</dbReference>
<dbReference type="FunFam" id="3.30.70.640:FF:000001">
    <property type="entry name" value="Cyclic pyranopterin monophosphate synthase"/>
    <property type="match status" value="1"/>
</dbReference>
<dbReference type="Gene3D" id="3.30.70.640">
    <property type="entry name" value="Molybdopterin cofactor biosynthesis C (MoaC) domain"/>
    <property type="match status" value="1"/>
</dbReference>
<dbReference type="HAMAP" id="MF_01224_B">
    <property type="entry name" value="MoaC_B"/>
    <property type="match status" value="1"/>
</dbReference>
<dbReference type="InterPro" id="IPR023045">
    <property type="entry name" value="MoaC"/>
</dbReference>
<dbReference type="InterPro" id="IPR047594">
    <property type="entry name" value="MoaC_bact/euk"/>
</dbReference>
<dbReference type="InterPro" id="IPR036522">
    <property type="entry name" value="MoaC_sf"/>
</dbReference>
<dbReference type="InterPro" id="IPR050105">
    <property type="entry name" value="MoCo_biosynth_MoaA/MoaC"/>
</dbReference>
<dbReference type="InterPro" id="IPR002820">
    <property type="entry name" value="Mopterin_CF_biosynth-C_dom"/>
</dbReference>
<dbReference type="NCBIfam" id="TIGR00581">
    <property type="entry name" value="moaC"/>
    <property type="match status" value="1"/>
</dbReference>
<dbReference type="NCBIfam" id="NF006870">
    <property type="entry name" value="PRK09364.1"/>
    <property type="match status" value="1"/>
</dbReference>
<dbReference type="PANTHER" id="PTHR22960">
    <property type="entry name" value="MOLYBDOPTERIN COFACTOR SYNTHESIS PROTEIN A"/>
    <property type="match status" value="1"/>
</dbReference>
<dbReference type="Pfam" id="PF01967">
    <property type="entry name" value="MoaC"/>
    <property type="match status" value="1"/>
</dbReference>
<dbReference type="SUPFAM" id="SSF55040">
    <property type="entry name" value="Molybdenum cofactor biosynthesis protein C, MoaC"/>
    <property type="match status" value="1"/>
</dbReference>